<proteinExistence type="evidence at transcript level"/>
<evidence type="ECO:0000250" key="1"/>
<evidence type="ECO:0000255" key="2"/>
<evidence type="ECO:0000303" key="3">
    <source>
    </source>
</evidence>
<evidence type="ECO:0000303" key="4">
    <source>
    </source>
</evidence>
<evidence type="ECO:0000303" key="5">
    <source ref="2"/>
</evidence>
<evidence type="ECO:0000305" key="6"/>
<protein>
    <recommendedName>
        <fullName>Zeta-sarcoglycan</fullName>
        <shortName>Zeta-SG</shortName>
    </recommendedName>
    <alternativeName>
        <fullName>ZSG1</fullName>
    </alternativeName>
</protein>
<name>SGCZ_MOUSE</name>
<comment type="function">
    <text>Component of the sarcoglycan complex, a subcomplex of the dystrophin-glycoprotein complex which forms a link between the F-actin cytoskeleton and the extracellular matrix. May play a role in the maintenance of striated muscle membrane stability.</text>
</comment>
<comment type="subcellular location">
    <subcellularLocation>
        <location evidence="1">Cell membrane</location>
        <location evidence="1">Sarcolemma</location>
        <topology evidence="1">Single-pass type II membrane protein</topology>
    </subcellularLocation>
    <subcellularLocation>
        <location evidence="1">Cytoplasm</location>
        <location evidence="1">Cytoskeleton</location>
    </subcellularLocation>
</comment>
<comment type="alternative products">
    <event type="alternative initiation"/>
    <isoform>
        <id>Q8BX51-1</id>
        <name>1</name>
        <sequence type="displayed"/>
    </isoform>
    <isoform>
        <id>Q8BX51-2</id>
        <name>2</name>
        <sequence type="described" ref="VSP_018885"/>
    </isoform>
</comment>
<comment type="tissue specificity">
    <text>Expressed in the heart, skeletal muscle and arterial vascular smooth muscle.</text>
</comment>
<comment type="similarity">
    <text evidence="6">Belongs to the sarcoglycan beta/delta/gamma/zeta family.</text>
</comment>
<keyword id="KW-0024">Alternative initiation</keyword>
<keyword id="KW-1003">Cell membrane</keyword>
<keyword id="KW-0963">Cytoplasm</keyword>
<keyword id="KW-0206">Cytoskeleton</keyword>
<keyword id="KW-1015">Disulfide bond</keyword>
<keyword id="KW-0325">Glycoprotein</keyword>
<keyword id="KW-0472">Membrane</keyword>
<keyword id="KW-1185">Reference proteome</keyword>
<keyword id="KW-0735">Signal-anchor</keyword>
<keyword id="KW-0812">Transmembrane</keyword>
<keyword id="KW-1133">Transmembrane helix</keyword>
<accession>Q8BX51</accession>
<accession>Q3UVZ2</accession>
<accession>Q8K1E7</accession>
<organism>
    <name type="scientific">Mus musculus</name>
    <name type="common">Mouse</name>
    <dbReference type="NCBI Taxonomy" id="10090"/>
    <lineage>
        <taxon>Eukaryota</taxon>
        <taxon>Metazoa</taxon>
        <taxon>Chordata</taxon>
        <taxon>Craniata</taxon>
        <taxon>Vertebrata</taxon>
        <taxon>Euteleostomi</taxon>
        <taxon>Mammalia</taxon>
        <taxon>Eutheria</taxon>
        <taxon>Euarchontoglires</taxon>
        <taxon>Glires</taxon>
        <taxon>Rodentia</taxon>
        <taxon>Myomorpha</taxon>
        <taxon>Muroidea</taxon>
        <taxon>Muridae</taxon>
        <taxon>Murinae</taxon>
        <taxon>Mus</taxon>
        <taxon>Mus</taxon>
    </lineage>
</organism>
<feature type="chain" id="PRO_0000031679" description="Zeta-sarcoglycan">
    <location>
        <begin position="1"/>
        <end position="311"/>
    </location>
</feature>
<feature type="topological domain" description="Cytoplasmic" evidence="2">
    <location>
        <begin position="1"/>
        <end position="50"/>
    </location>
</feature>
<feature type="transmembrane region" description="Helical; Signal-anchor for type II membrane protein" evidence="2">
    <location>
        <begin position="51"/>
        <end position="71"/>
    </location>
</feature>
<feature type="topological domain" description="Extracellular" evidence="2">
    <location>
        <begin position="72"/>
        <end position="311"/>
    </location>
</feature>
<feature type="glycosylation site" description="N-linked (GlcNAc...) asparagine" evidence="2">
    <location>
        <position position="75"/>
    </location>
</feature>
<feature type="glycosylation site" description="N-linked (GlcNAc...) asparagine" evidence="2">
    <location>
        <position position="123"/>
    </location>
</feature>
<feature type="disulfide bond" evidence="2">
    <location>
        <begin position="285"/>
        <end position="301"/>
    </location>
</feature>
<feature type="splice variant" id="VSP_018885" description="In isoform 2." evidence="3 4 5">
    <location>
        <begin position="1"/>
        <end position="13"/>
    </location>
</feature>
<feature type="sequence conflict" description="In Ref. 1; AAM23275." evidence="6" ref="1">
    <original>N</original>
    <variation>D</variation>
    <location>
        <position position="274"/>
    </location>
</feature>
<reference key="1">
    <citation type="journal article" date="2002" name="Hum. Mol. Genet.">
        <title>Zeta-sarcoglycan, a novel component of the sarcoglycan complex, is reduced in muscular dystrophy.</title>
        <authorList>
            <person name="Wheeler M.T."/>
            <person name="Zarnegar S."/>
            <person name="McNally E.M."/>
        </authorList>
    </citation>
    <scope>NUCLEOTIDE SEQUENCE [MRNA] (ISOFORMS 1 AND 2)</scope>
    <scope>ALTERNATIVE INITIATION</scope>
    <source>
        <strain>C57BL/6J</strain>
        <tissue>Heart</tissue>
        <tissue>Skeletal muscle</tissue>
    </source>
</reference>
<reference key="2">
    <citation type="submission" date="2003-03" db="EMBL/GenBank/DDBJ databases">
        <title>Cloning and characterization of zeta-sarcoglycan: new insights into the structure of the sarcoglycan complex.</title>
        <authorList>
            <person name="Svensson R.U."/>
            <person name="Groh S.C."/>
            <person name="Campbell K.P."/>
        </authorList>
    </citation>
    <scope>NUCLEOTIDE SEQUENCE [MRNA] (ISOFORM 2)</scope>
    <source>
        <strain>C57BL/6J</strain>
        <tissue>Brain</tissue>
    </source>
</reference>
<reference key="3">
    <citation type="journal article" date="2005" name="Science">
        <title>The transcriptional landscape of the mammalian genome.</title>
        <authorList>
            <person name="Carninci P."/>
            <person name="Kasukawa T."/>
            <person name="Katayama S."/>
            <person name="Gough J."/>
            <person name="Frith M.C."/>
            <person name="Maeda N."/>
            <person name="Oyama R."/>
            <person name="Ravasi T."/>
            <person name="Lenhard B."/>
            <person name="Wells C."/>
            <person name="Kodzius R."/>
            <person name="Shimokawa K."/>
            <person name="Bajic V.B."/>
            <person name="Brenner S.E."/>
            <person name="Batalov S."/>
            <person name="Forrest A.R."/>
            <person name="Zavolan M."/>
            <person name="Davis M.J."/>
            <person name="Wilming L.G."/>
            <person name="Aidinis V."/>
            <person name="Allen J.E."/>
            <person name="Ambesi-Impiombato A."/>
            <person name="Apweiler R."/>
            <person name="Aturaliya R.N."/>
            <person name="Bailey T.L."/>
            <person name="Bansal M."/>
            <person name="Baxter L."/>
            <person name="Beisel K.W."/>
            <person name="Bersano T."/>
            <person name="Bono H."/>
            <person name="Chalk A.M."/>
            <person name="Chiu K.P."/>
            <person name="Choudhary V."/>
            <person name="Christoffels A."/>
            <person name="Clutterbuck D.R."/>
            <person name="Crowe M.L."/>
            <person name="Dalla E."/>
            <person name="Dalrymple B.P."/>
            <person name="de Bono B."/>
            <person name="Della Gatta G."/>
            <person name="di Bernardo D."/>
            <person name="Down T."/>
            <person name="Engstrom P."/>
            <person name="Fagiolini M."/>
            <person name="Faulkner G."/>
            <person name="Fletcher C.F."/>
            <person name="Fukushima T."/>
            <person name="Furuno M."/>
            <person name="Futaki S."/>
            <person name="Gariboldi M."/>
            <person name="Georgii-Hemming P."/>
            <person name="Gingeras T.R."/>
            <person name="Gojobori T."/>
            <person name="Green R.E."/>
            <person name="Gustincich S."/>
            <person name="Harbers M."/>
            <person name="Hayashi Y."/>
            <person name="Hensch T.K."/>
            <person name="Hirokawa N."/>
            <person name="Hill D."/>
            <person name="Huminiecki L."/>
            <person name="Iacono M."/>
            <person name="Ikeo K."/>
            <person name="Iwama A."/>
            <person name="Ishikawa T."/>
            <person name="Jakt M."/>
            <person name="Kanapin A."/>
            <person name="Katoh M."/>
            <person name="Kawasawa Y."/>
            <person name="Kelso J."/>
            <person name="Kitamura H."/>
            <person name="Kitano H."/>
            <person name="Kollias G."/>
            <person name="Krishnan S.P."/>
            <person name="Kruger A."/>
            <person name="Kummerfeld S.K."/>
            <person name="Kurochkin I.V."/>
            <person name="Lareau L.F."/>
            <person name="Lazarevic D."/>
            <person name="Lipovich L."/>
            <person name="Liu J."/>
            <person name="Liuni S."/>
            <person name="McWilliam S."/>
            <person name="Madan Babu M."/>
            <person name="Madera M."/>
            <person name="Marchionni L."/>
            <person name="Matsuda H."/>
            <person name="Matsuzawa S."/>
            <person name="Miki H."/>
            <person name="Mignone F."/>
            <person name="Miyake S."/>
            <person name="Morris K."/>
            <person name="Mottagui-Tabar S."/>
            <person name="Mulder N."/>
            <person name="Nakano N."/>
            <person name="Nakauchi H."/>
            <person name="Ng P."/>
            <person name="Nilsson R."/>
            <person name="Nishiguchi S."/>
            <person name="Nishikawa S."/>
            <person name="Nori F."/>
            <person name="Ohara O."/>
            <person name="Okazaki Y."/>
            <person name="Orlando V."/>
            <person name="Pang K.C."/>
            <person name="Pavan W.J."/>
            <person name="Pavesi G."/>
            <person name="Pesole G."/>
            <person name="Petrovsky N."/>
            <person name="Piazza S."/>
            <person name="Reed J."/>
            <person name="Reid J.F."/>
            <person name="Ring B.Z."/>
            <person name="Ringwald M."/>
            <person name="Rost B."/>
            <person name="Ruan Y."/>
            <person name="Salzberg S.L."/>
            <person name="Sandelin A."/>
            <person name="Schneider C."/>
            <person name="Schoenbach C."/>
            <person name="Sekiguchi K."/>
            <person name="Semple C.A."/>
            <person name="Seno S."/>
            <person name="Sessa L."/>
            <person name="Sheng Y."/>
            <person name="Shibata Y."/>
            <person name="Shimada H."/>
            <person name="Shimada K."/>
            <person name="Silva D."/>
            <person name="Sinclair B."/>
            <person name="Sperling S."/>
            <person name="Stupka E."/>
            <person name="Sugiura K."/>
            <person name="Sultana R."/>
            <person name="Takenaka Y."/>
            <person name="Taki K."/>
            <person name="Tammoja K."/>
            <person name="Tan S.L."/>
            <person name="Tang S."/>
            <person name="Taylor M.S."/>
            <person name="Tegner J."/>
            <person name="Teichmann S.A."/>
            <person name="Ueda H.R."/>
            <person name="van Nimwegen E."/>
            <person name="Verardo R."/>
            <person name="Wei C.L."/>
            <person name="Yagi K."/>
            <person name="Yamanishi H."/>
            <person name="Zabarovsky E."/>
            <person name="Zhu S."/>
            <person name="Zimmer A."/>
            <person name="Hide W."/>
            <person name="Bult C."/>
            <person name="Grimmond S.M."/>
            <person name="Teasdale R.D."/>
            <person name="Liu E.T."/>
            <person name="Brusic V."/>
            <person name="Quackenbush J."/>
            <person name="Wahlestedt C."/>
            <person name="Mattick J.S."/>
            <person name="Hume D.A."/>
            <person name="Kai C."/>
            <person name="Sasaki D."/>
            <person name="Tomaru Y."/>
            <person name="Fukuda S."/>
            <person name="Kanamori-Katayama M."/>
            <person name="Suzuki M."/>
            <person name="Aoki J."/>
            <person name="Arakawa T."/>
            <person name="Iida J."/>
            <person name="Imamura K."/>
            <person name="Itoh M."/>
            <person name="Kato T."/>
            <person name="Kawaji H."/>
            <person name="Kawagashira N."/>
            <person name="Kawashima T."/>
            <person name="Kojima M."/>
            <person name="Kondo S."/>
            <person name="Konno H."/>
            <person name="Nakano K."/>
            <person name="Ninomiya N."/>
            <person name="Nishio T."/>
            <person name="Okada M."/>
            <person name="Plessy C."/>
            <person name="Shibata K."/>
            <person name="Shiraki T."/>
            <person name="Suzuki S."/>
            <person name="Tagami M."/>
            <person name="Waki K."/>
            <person name="Watahiki A."/>
            <person name="Okamura-Oho Y."/>
            <person name="Suzuki H."/>
            <person name="Kawai J."/>
            <person name="Hayashizaki Y."/>
        </authorList>
    </citation>
    <scope>NUCLEOTIDE SEQUENCE [LARGE SCALE MRNA] (ISOFORMS 1 AND 2)</scope>
    <source>
        <strain>C57BL/6J</strain>
        <tissue>Cerebellum</tissue>
        <tissue>Diencephalon</tissue>
    </source>
</reference>
<dbReference type="EMBL" id="AY095374">
    <property type="protein sequence ID" value="AAM23275.1"/>
    <property type="molecule type" value="mRNA"/>
</dbReference>
<dbReference type="EMBL" id="AY250713">
    <property type="protein sequence ID" value="AAP76378.1"/>
    <property type="molecule type" value="mRNA"/>
</dbReference>
<dbReference type="EMBL" id="AK048960">
    <property type="protein sequence ID" value="BAC33500.1"/>
    <property type="molecule type" value="mRNA"/>
</dbReference>
<dbReference type="EMBL" id="AK136779">
    <property type="protein sequence ID" value="BAE23127.1"/>
    <property type="molecule type" value="mRNA"/>
</dbReference>
<dbReference type="CCDS" id="CCDS22251.2">
    <molecule id="Q8BX51-1"/>
</dbReference>
<dbReference type="RefSeq" id="NP_665840.2">
    <molecule id="Q8BX51-1"/>
    <property type="nucleotide sequence ID" value="NM_145841.2"/>
</dbReference>
<dbReference type="RefSeq" id="XP_006509183.1">
    <molecule id="Q8BX51-1"/>
    <property type="nucleotide sequence ID" value="XM_006509120.5"/>
</dbReference>
<dbReference type="RefSeq" id="XP_011240440.1">
    <molecule id="Q8BX51-2"/>
    <property type="nucleotide sequence ID" value="XM_011242138.2"/>
</dbReference>
<dbReference type="SMR" id="Q8BX51"/>
<dbReference type="BioGRID" id="232651">
    <property type="interactions" value="2"/>
</dbReference>
<dbReference type="CORUM" id="Q8BX51"/>
<dbReference type="FunCoup" id="Q8BX51">
    <property type="interactions" value="351"/>
</dbReference>
<dbReference type="STRING" id="10090.ENSMUSP00000113912"/>
<dbReference type="GlyCosmos" id="Q8BX51">
    <property type="glycosylation" value="2 sites, No reported glycans"/>
</dbReference>
<dbReference type="GlyGen" id="Q8BX51">
    <property type="glycosylation" value="2 sites, 1 N-linked glycan (1 site)"/>
</dbReference>
<dbReference type="PhosphoSitePlus" id="Q8BX51"/>
<dbReference type="PaxDb" id="10090-ENSMUSP00000113912"/>
<dbReference type="ProteomicsDB" id="257216">
    <molecule id="Q8BX51-1"/>
</dbReference>
<dbReference type="ProteomicsDB" id="257217">
    <molecule id="Q8BX51-2"/>
</dbReference>
<dbReference type="Antibodypedia" id="2695">
    <property type="antibodies" value="21 antibodies from 12 providers"/>
</dbReference>
<dbReference type="DNASU" id="244431"/>
<dbReference type="Ensembl" id="ENSMUST00000118896.2">
    <molecule id="Q8BX51-1"/>
    <property type="protein sequence ID" value="ENSMUSP00000113912.2"/>
    <property type="gene ID" value="ENSMUSG00000039539.14"/>
</dbReference>
<dbReference type="GeneID" id="244431"/>
<dbReference type="KEGG" id="mmu:244431"/>
<dbReference type="UCSC" id="uc009lme.2">
    <molecule id="Q8BX51-1"/>
    <property type="organism name" value="mouse"/>
</dbReference>
<dbReference type="AGR" id="MGI:2388820"/>
<dbReference type="CTD" id="137868"/>
<dbReference type="MGI" id="MGI:2388820">
    <property type="gene designation" value="Sgcz"/>
</dbReference>
<dbReference type="VEuPathDB" id="HostDB:ENSMUSG00000039539"/>
<dbReference type="eggNOG" id="KOG3950">
    <property type="taxonomic scope" value="Eukaryota"/>
</dbReference>
<dbReference type="GeneTree" id="ENSGT00940000157146"/>
<dbReference type="HOGENOM" id="CLU_043450_0_0_1"/>
<dbReference type="InParanoid" id="Q8BX51"/>
<dbReference type="OMA" id="FQMTREQ"/>
<dbReference type="OrthoDB" id="5973998at2759"/>
<dbReference type="PhylomeDB" id="Q8BX51"/>
<dbReference type="TreeFam" id="TF313538"/>
<dbReference type="Reactome" id="R-MMU-9913351">
    <property type="pathway name" value="Formation of the dystrophin-glycoprotein complex (DGC)"/>
</dbReference>
<dbReference type="BioGRID-ORCS" id="244431">
    <property type="hits" value="2 hits in 76 CRISPR screens"/>
</dbReference>
<dbReference type="ChiTaRS" id="Sgcz">
    <property type="organism name" value="mouse"/>
</dbReference>
<dbReference type="PRO" id="PR:Q8BX51"/>
<dbReference type="Proteomes" id="UP000000589">
    <property type="component" value="Chromosome 8"/>
</dbReference>
<dbReference type="RNAct" id="Q8BX51">
    <property type="molecule type" value="protein"/>
</dbReference>
<dbReference type="Bgee" id="ENSMUSG00000039539">
    <property type="expression patterns" value="Expressed in striatum and 17 other cell types or tissues"/>
</dbReference>
<dbReference type="ExpressionAtlas" id="Q8BX51">
    <property type="expression patterns" value="baseline and differential"/>
</dbReference>
<dbReference type="GO" id="GO:0005737">
    <property type="term" value="C:cytoplasm"/>
    <property type="evidence" value="ECO:0007669"/>
    <property type="project" value="UniProtKB-KW"/>
</dbReference>
<dbReference type="GO" id="GO:0005856">
    <property type="term" value="C:cytoskeleton"/>
    <property type="evidence" value="ECO:0007669"/>
    <property type="project" value="UniProtKB-SubCell"/>
</dbReference>
<dbReference type="GO" id="GO:0005886">
    <property type="term" value="C:plasma membrane"/>
    <property type="evidence" value="ECO:0000314"/>
    <property type="project" value="MGI"/>
</dbReference>
<dbReference type="GO" id="GO:0016012">
    <property type="term" value="C:sarcoglycan complex"/>
    <property type="evidence" value="ECO:0000314"/>
    <property type="project" value="MGI"/>
</dbReference>
<dbReference type="GO" id="GO:0042383">
    <property type="term" value="C:sarcolemma"/>
    <property type="evidence" value="ECO:0007669"/>
    <property type="project" value="UniProtKB-SubCell"/>
</dbReference>
<dbReference type="GO" id="GO:0061024">
    <property type="term" value="P:membrane organization"/>
    <property type="evidence" value="ECO:0000304"/>
    <property type="project" value="MGI"/>
</dbReference>
<dbReference type="InterPro" id="IPR006875">
    <property type="entry name" value="Sarcoglycan"/>
</dbReference>
<dbReference type="InterPro" id="IPR039972">
    <property type="entry name" value="Sarcoglycan_gamma/delta/zeta"/>
</dbReference>
<dbReference type="PANTHER" id="PTHR12939">
    <property type="entry name" value="SARCOGLYCAN"/>
    <property type="match status" value="1"/>
</dbReference>
<dbReference type="PANTHER" id="PTHR12939:SF5">
    <property type="entry name" value="ZETA-SARCOGLYCAN"/>
    <property type="match status" value="1"/>
</dbReference>
<dbReference type="Pfam" id="PF04790">
    <property type="entry name" value="Sarcoglycan_1"/>
    <property type="match status" value="1"/>
</dbReference>
<sequence length="311" mass="34461">MDRSTDLDIQELKMTREQYILATQQNNLPRPENAQLYPVGIYGWRKRCLYFFVLLLLVTMIVNLAMTIWILKVMNFTVDGMGNLRVTKKGIRLEGISEFLLPLYVKEIHSRKDSPLVLQSDRNVTVNARNHMGQLTGQLTVGAEAVEAQCKRFEVRASEDGRVLFSADEDEITIGAEKLKVTGTEGAVFGHSVETPHIRAEPSQDLRLESPTRSLKMEAPRGVQVSAAAGDFKATCRKELHLQSTEGEIFLNADSIRLGNLPIGSFSSSTSSSNSRQTVYELCVCPNGKLYLSPAGVGSTCQSSSSICLWN</sequence>
<gene>
    <name type="primary">Sgcz</name>
</gene>